<protein>
    <recommendedName>
        <fullName evidence="1">Large ribosomal subunit protein uL1</fullName>
    </recommendedName>
    <alternativeName>
        <fullName evidence="2">50S ribosomal protein L1</fullName>
    </alternativeName>
</protein>
<dbReference type="EMBL" id="CP000236">
    <property type="protein sequence ID" value="ABD44780.1"/>
    <property type="molecule type" value="Genomic_DNA"/>
</dbReference>
<dbReference type="RefSeq" id="WP_011452918.1">
    <property type="nucleotide sequence ID" value="NC_007799.1"/>
</dbReference>
<dbReference type="SMR" id="Q2GFP0"/>
<dbReference type="STRING" id="205920.ECH_0955"/>
<dbReference type="KEGG" id="ech:ECH_0955"/>
<dbReference type="eggNOG" id="COG0081">
    <property type="taxonomic scope" value="Bacteria"/>
</dbReference>
<dbReference type="HOGENOM" id="CLU_062853_0_0_5"/>
<dbReference type="OrthoDB" id="9803740at2"/>
<dbReference type="Proteomes" id="UP000008320">
    <property type="component" value="Chromosome"/>
</dbReference>
<dbReference type="GO" id="GO:0015934">
    <property type="term" value="C:large ribosomal subunit"/>
    <property type="evidence" value="ECO:0007669"/>
    <property type="project" value="InterPro"/>
</dbReference>
<dbReference type="GO" id="GO:0019843">
    <property type="term" value="F:rRNA binding"/>
    <property type="evidence" value="ECO:0007669"/>
    <property type="project" value="UniProtKB-UniRule"/>
</dbReference>
<dbReference type="GO" id="GO:0003735">
    <property type="term" value="F:structural constituent of ribosome"/>
    <property type="evidence" value="ECO:0007669"/>
    <property type="project" value="InterPro"/>
</dbReference>
<dbReference type="GO" id="GO:0000049">
    <property type="term" value="F:tRNA binding"/>
    <property type="evidence" value="ECO:0007669"/>
    <property type="project" value="UniProtKB-KW"/>
</dbReference>
<dbReference type="GO" id="GO:0006417">
    <property type="term" value="P:regulation of translation"/>
    <property type="evidence" value="ECO:0007669"/>
    <property type="project" value="UniProtKB-KW"/>
</dbReference>
<dbReference type="GO" id="GO:0006412">
    <property type="term" value="P:translation"/>
    <property type="evidence" value="ECO:0007669"/>
    <property type="project" value="UniProtKB-UniRule"/>
</dbReference>
<dbReference type="CDD" id="cd00403">
    <property type="entry name" value="Ribosomal_L1"/>
    <property type="match status" value="1"/>
</dbReference>
<dbReference type="FunFam" id="3.40.50.790:FF:000001">
    <property type="entry name" value="50S ribosomal protein L1"/>
    <property type="match status" value="1"/>
</dbReference>
<dbReference type="Gene3D" id="3.30.190.20">
    <property type="match status" value="1"/>
</dbReference>
<dbReference type="Gene3D" id="3.40.50.790">
    <property type="match status" value="1"/>
</dbReference>
<dbReference type="HAMAP" id="MF_01318_B">
    <property type="entry name" value="Ribosomal_uL1_B"/>
    <property type="match status" value="1"/>
</dbReference>
<dbReference type="InterPro" id="IPR005878">
    <property type="entry name" value="Ribosom_uL1_bac-type"/>
</dbReference>
<dbReference type="InterPro" id="IPR002143">
    <property type="entry name" value="Ribosomal_uL1"/>
</dbReference>
<dbReference type="InterPro" id="IPR023674">
    <property type="entry name" value="Ribosomal_uL1-like"/>
</dbReference>
<dbReference type="InterPro" id="IPR028364">
    <property type="entry name" value="Ribosomal_uL1/biogenesis"/>
</dbReference>
<dbReference type="InterPro" id="IPR016095">
    <property type="entry name" value="Ribosomal_uL1_3-a/b-sand"/>
</dbReference>
<dbReference type="InterPro" id="IPR023673">
    <property type="entry name" value="Ribosomal_uL1_CS"/>
</dbReference>
<dbReference type="NCBIfam" id="TIGR01169">
    <property type="entry name" value="rplA_bact"/>
    <property type="match status" value="1"/>
</dbReference>
<dbReference type="PANTHER" id="PTHR36427">
    <property type="entry name" value="54S RIBOSOMAL PROTEIN L1, MITOCHONDRIAL"/>
    <property type="match status" value="1"/>
</dbReference>
<dbReference type="PANTHER" id="PTHR36427:SF3">
    <property type="entry name" value="LARGE RIBOSOMAL SUBUNIT PROTEIN UL1M"/>
    <property type="match status" value="1"/>
</dbReference>
<dbReference type="Pfam" id="PF00687">
    <property type="entry name" value="Ribosomal_L1"/>
    <property type="match status" value="1"/>
</dbReference>
<dbReference type="PIRSF" id="PIRSF002155">
    <property type="entry name" value="Ribosomal_L1"/>
    <property type="match status" value="1"/>
</dbReference>
<dbReference type="SUPFAM" id="SSF56808">
    <property type="entry name" value="Ribosomal protein L1"/>
    <property type="match status" value="1"/>
</dbReference>
<dbReference type="PROSITE" id="PS01199">
    <property type="entry name" value="RIBOSOMAL_L1"/>
    <property type="match status" value="1"/>
</dbReference>
<name>RL1_EHRCR</name>
<keyword id="KW-1185">Reference proteome</keyword>
<keyword id="KW-0678">Repressor</keyword>
<keyword id="KW-0687">Ribonucleoprotein</keyword>
<keyword id="KW-0689">Ribosomal protein</keyword>
<keyword id="KW-0694">RNA-binding</keyword>
<keyword id="KW-0699">rRNA-binding</keyword>
<keyword id="KW-0810">Translation regulation</keyword>
<keyword id="KW-0820">tRNA-binding</keyword>
<accession>Q2GFP0</accession>
<feature type="chain" id="PRO_0000307652" description="Large ribosomal subunit protein uL1">
    <location>
        <begin position="1"/>
        <end position="220"/>
    </location>
</feature>
<sequence>MNSLISNEVYDVESGLRKVIESAKANFCESVDVAINLNINSSKSDEQVRGCVVLPKGLGREIKVAVFAKGGYLEMAREAMADIVGDEELIEEVKKKQCKLDVDWCLTTPDFMASVSSIAKILGPKGLMPNPKFNTVTFELAKAIKMIKSGQIKFKSDKTGIVHAKIGNIKFSIEDLLENFNAVISAVKQCKPASIKGLYFKDVFIISTMGKSVKVENLNN</sequence>
<reference key="1">
    <citation type="journal article" date="2006" name="PLoS Genet.">
        <title>Comparative genomics of emerging human ehrlichiosis agents.</title>
        <authorList>
            <person name="Dunning Hotopp J.C."/>
            <person name="Lin M."/>
            <person name="Madupu R."/>
            <person name="Crabtree J."/>
            <person name="Angiuoli S.V."/>
            <person name="Eisen J.A."/>
            <person name="Seshadri R."/>
            <person name="Ren Q."/>
            <person name="Wu M."/>
            <person name="Utterback T.R."/>
            <person name="Smith S."/>
            <person name="Lewis M."/>
            <person name="Khouri H."/>
            <person name="Zhang C."/>
            <person name="Niu H."/>
            <person name="Lin Q."/>
            <person name="Ohashi N."/>
            <person name="Zhi N."/>
            <person name="Nelson W.C."/>
            <person name="Brinkac L.M."/>
            <person name="Dodson R.J."/>
            <person name="Rosovitz M.J."/>
            <person name="Sundaram J.P."/>
            <person name="Daugherty S.C."/>
            <person name="Davidsen T."/>
            <person name="Durkin A.S."/>
            <person name="Gwinn M.L."/>
            <person name="Haft D.H."/>
            <person name="Selengut J.D."/>
            <person name="Sullivan S.A."/>
            <person name="Zafar N."/>
            <person name="Zhou L."/>
            <person name="Benahmed F."/>
            <person name="Forberger H."/>
            <person name="Halpin R."/>
            <person name="Mulligan S."/>
            <person name="Robinson J."/>
            <person name="White O."/>
            <person name="Rikihisa Y."/>
            <person name="Tettelin H."/>
        </authorList>
    </citation>
    <scope>NUCLEOTIDE SEQUENCE [LARGE SCALE GENOMIC DNA]</scope>
    <source>
        <strain>ATCC CRL-10679 / Arkansas</strain>
    </source>
</reference>
<organism>
    <name type="scientific">Ehrlichia chaffeensis (strain ATCC CRL-10679 / Arkansas)</name>
    <dbReference type="NCBI Taxonomy" id="205920"/>
    <lineage>
        <taxon>Bacteria</taxon>
        <taxon>Pseudomonadati</taxon>
        <taxon>Pseudomonadota</taxon>
        <taxon>Alphaproteobacteria</taxon>
        <taxon>Rickettsiales</taxon>
        <taxon>Anaplasmataceae</taxon>
        <taxon>Ehrlichia</taxon>
    </lineage>
</organism>
<gene>
    <name evidence="1" type="primary">rplA</name>
    <name type="ordered locus">ECH_0955</name>
</gene>
<evidence type="ECO:0000255" key="1">
    <source>
        <dbReference type="HAMAP-Rule" id="MF_01318"/>
    </source>
</evidence>
<evidence type="ECO:0000305" key="2"/>
<proteinExistence type="inferred from homology"/>
<comment type="function">
    <text evidence="1">Binds directly to 23S rRNA. The L1 stalk is quite mobile in the ribosome, and is involved in E site tRNA release.</text>
</comment>
<comment type="function">
    <text evidence="1">Protein L1 is also a translational repressor protein, it controls the translation of the L11 operon by binding to its mRNA.</text>
</comment>
<comment type="subunit">
    <text evidence="1">Part of the 50S ribosomal subunit.</text>
</comment>
<comment type="similarity">
    <text evidence="1">Belongs to the universal ribosomal protein uL1 family.</text>
</comment>